<gene>
    <name type="primary">y01B</name>
    <name type="synonym">dda.2</name>
</gene>
<keyword id="KW-1185">Reference proteome</keyword>
<feature type="chain" id="PRO_0000165085" description="Uncharacterized 29.0 kDa protein in dda-modA intergenic region">
    <location>
        <begin position="1"/>
        <end position="248"/>
    </location>
</feature>
<sequence length="248" mass="29041">MKLSNNQIRKIKRRLEHTQASAKRRSKDFNLDFNYIKNILDQKVCAYSGEPFDNRIEGEKLSLERFDNNVGYIKGNVIAVKKKYNTFRSDYTLEELIEKRDLFALRIGRSSAKKVHKLNLDEKKWAKIKKTYNQIKAIQKKRENRIEHISQLSKSKQTSDIKLRIIALKARIDGSRIAEGAEVVKLNVLLKGSDWKIVKKLSEAEMQYDMCDKIIQGVERYQNLSFIDKLKLKRGYPLNCSIFKLIRG</sequence>
<accession>P39420</accession>
<reference key="1">
    <citation type="journal article" date="1990" name="Gene">
        <title>The bacteriophage T4 gene mrh whose product inhibits late T4 gene expression in an Escherichia coli rpoH (sigma 32) mutant.</title>
        <authorList>
            <person name="Frazier M.W."/>
            <person name="Mosig G."/>
        </authorList>
    </citation>
    <scope>NUCLEOTIDE SEQUENCE [GENOMIC DNA]</scope>
</reference>
<reference key="2">
    <citation type="journal article" date="2003" name="Microbiol. Mol. Biol. Rev.">
        <title>Bacteriophage T4 genome.</title>
        <authorList>
            <person name="Miller E.S."/>
            <person name="Kutter E."/>
            <person name="Mosig G."/>
            <person name="Arisaka F."/>
            <person name="Kunisawa T."/>
            <person name="Ruger W."/>
        </authorList>
    </citation>
    <scope>NUCLEOTIDE SEQUENCE [LARGE SCALE GENOMIC DNA]</scope>
</reference>
<protein>
    <recommendedName>
        <fullName>Uncharacterized 29.0 kDa protein in dda-modA intergenic region</fullName>
    </recommendedName>
</protein>
<organismHost>
    <name type="scientific">Escherichia coli</name>
    <dbReference type="NCBI Taxonomy" id="562"/>
</organismHost>
<organism>
    <name type="scientific">Enterobacteria phage T4</name>
    <name type="common">Bacteriophage T4</name>
    <dbReference type="NCBI Taxonomy" id="10665"/>
    <lineage>
        <taxon>Viruses</taxon>
        <taxon>Duplodnaviria</taxon>
        <taxon>Heunggongvirae</taxon>
        <taxon>Uroviricota</taxon>
        <taxon>Caudoviricetes</taxon>
        <taxon>Straboviridae</taxon>
        <taxon>Tevenvirinae</taxon>
        <taxon>Tequatrovirus</taxon>
    </lineage>
</organism>
<dbReference type="EMBL" id="M30001">
    <property type="protein sequence ID" value="AAB07803.1"/>
    <property type="molecule type" value="Genomic_DNA"/>
</dbReference>
<dbReference type="EMBL" id="AF158101">
    <property type="protein sequence ID" value="AAD42557.1"/>
    <property type="molecule type" value="Genomic_DNA"/>
</dbReference>
<dbReference type="PIR" id="T10144">
    <property type="entry name" value="T10144"/>
</dbReference>
<dbReference type="RefSeq" id="NP_049634.1">
    <property type="nucleotide sequence ID" value="NC_000866.4"/>
</dbReference>
<dbReference type="SMR" id="P39420"/>
<dbReference type="GeneID" id="1258797"/>
<dbReference type="KEGG" id="vg:1258797"/>
<dbReference type="OrthoDB" id="6550at10239"/>
<dbReference type="Proteomes" id="UP000009087">
    <property type="component" value="Segment"/>
</dbReference>
<dbReference type="Gene3D" id="3.30.40.220">
    <property type="match status" value="1"/>
</dbReference>
<proteinExistence type="predicted"/>
<name>Y01B_BPT4</name>